<organism>
    <name type="scientific">Wickerhamomyces canadensis</name>
    <name type="common">Yeast</name>
    <name type="synonym">Pichia canadensis</name>
    <dbReference type="NCBI Taxonomy" id="1156965"/>
    <lineage>
        <taxon>Eukaryota</taxon>
        <taxon>Fungi</taxon>
        <taxon>Dikarya</taxon>
        <taxon>Ascomycota</taxon>
        <taxon>Saccharomycotina</taxon>
        <taxon>Saccharomycetes</taxon>
        <taxon>Phaffomycetales</taxon>
        <taxon>Wickerhamomycetaceae</taxon>
        <taxon>Wickerhamomyces</taxon>
    </lineage>
</organism>
<evidence type="ECO:0000250" key="1"/>
<evidence type="ECO:0000255" key="2"/>
<evidence type="ECO:0000305" key="3"/>
<dbReference type="EC" id="7.1.1.2"/>
<dbReference type="EMBL" id="D31785">
    <property type="protein sequence ID" value="BAA06573.2"/>
    <property type="molecule type" value="Genomic_DNA"/>
</dbReference>
<dbReference type="PIR" id="S58750">
    <property type="entry name" value="S58750"/>
</dbReference>
<dbReference type="RefSeq" id="NP_038218.1">
    <property type="nucleotide sequence ID" value="NC_001762.1"/>
</dbReference>
<dbReference type="SMR" id="P48906"/>
<dbReference type="GeneID" id="800551"/>
<dbReference type="GO" id="GO:0005743">
    <property type="term" value="C:mitochondrial inner membrane"/>
    <property type="evidence" value="ECO:0007669"/>
    <property type="project" value="UniProtKB-SubCell"/>
</dbReference>
<dbReference type="GO" id="GO:0008137">
    <property type="term" value="F:NADH dehydrogenase (ubiquinone) activity"/>
    <property type="evidence" value="ECO:0007669"/>
    <property type="project" value="UniProtKB-EC"/>
</dbReference>
<dbReference type="InterPro" id="IPR001750">
    <property type="entry name" value="ND/Mrp_TM"/>
</dbReference>
<dbReference type="PANTHER" id="PTHR22773">
    <property type="entry name" value="NADH DEHYDROGENASE"/>
    <property type="match status" value="1"/>
</dbReference>
<dbReference type="Pfam" id="PF00361">
    <property type="entry name" value="Proton_antipo_M"/>
    <property type="match status" value="1"/>
</dbReference>
<accession>P48906</accession>
<sequence>MLILSLFILIIYSSIINNIDTINLLSSSNKIGWKLQNYNIIRIGIIIILYSLYIFKDISLSYIFNNYNNNNDLNIYIFNDLYKLNIFNIYIIFLLLIVIISLLSINTTYLTKIQIKNNNNNISIGKSDNYIELNIYYISIIIFNIIGLILLLTSNNLISIFISIELQSYSLYILTGIIPKSQKSGHNSLFYYLIGGIGSIIILYGISLLYYITSNIFINNINLIYSLDIYNINNNILIGWLFIIIGLLIKIGAAPMYNWSILLYSNSNTIITSYISLIPKISILSYILLIILNLYNLNNLNNLFNNNNNNNLIYILSIIIILSLIIGSIGGLTQIKIKNILAYSGLLNIGYFLLIILSLINNNNINSILAYIIYITQYCFNHISIFILLIIAIIYNNNYNNFITNKNLIYIYELNYIKNNRYLIFCLIIIIGSFIGIPPLFGFYGKYYLLISSINSNYLFLSLLLIISSIISSIYYLYFLNITLFDNNNNKNNNNNNNNESLLIPSFNIINDIKNNTSLSLSNKLKNNQVGNYITYILSSYILIILFNFIQWKNILKGTYLISILLF</sequence>
<comment type="function">
    <text evidence="1">Core subunit of the mitochondrial membrane respiratory chain NADH dehydrogenase (Complex I) that is believed to belong to the minimal assembly required for catalysis. Complex I functions in the transfer of electrons from NADH to the respiratory chain. The immediate electron acceptor for the enzyme is believed to be ubiquinone (By similarity).</text>
</comment>
<comment type="catalytic activity">
    <reaction>
        <text>a ubiquinone + NADH + 5 H(+)(in) = a ubiquinol + NAD(+) + 4 H(+)(out)</text>
        <dbReference type="Rhea" id="RHEA:29091"/>
        <dbReference type="Rhea" id="RHEA-COMP:9565"/>
        <dbReference type="Rhea" id="RHEA-COMP:9566"/>
        <dbReference type="ChEBI" id="CHEBI:15378"/>
        <dbReference type="ChEBI" id="CHEBI:16389"/>
        <dbReference type="ChEBI" id="CHEBI:17976"/>
        <dbReference type="ChEBI" id="CHEBI:57540"/>
        <dbReference type="ChEBI" id="CHEBI:57945"/>
        <dbReference type="EC" id="7.1.1.2"/>
    </reaction>
</comment>
<comment type="subcellular location">
    <subcellularLocation>
        <location>Mitochondrion inner membrane</location>
        <topology>Multi-pass membrane protein</topology>
    </subcellularLocation>
</comment>
<comment type="similarity">
    <text evidence="3">Belongs to the complex I subunit 2 family.</text>
</comment>
<keyword id="KW-0249">Electron transport</keyword>
<keyword id="KW-0472">Membrane</keyword>
<keyword id="KW-0496">Mitochondrion</keyword>
<keyword id="KW-0999">Mitochondrion inner membrane</keyword>
<keyword id="KW-0520">NAD</keyword>
<keyword id="KW-0679">Respiratory chain</keyword>
<keyword id="KW-1278">Translocase</keyword>
<keyword id="KW-0812">Transmembrane</keyword>
<keyword id="KW-1133">Transmembrane helix</keyword>
<keyword id="KW-0813">Transport</keyword>
<keyword id="KW-0830">Ubiquinone</keyword>
<protein>
    <recommendedName>
        <fullName>NADH-ubiquinone oxidoreductase chain 2</fullName>
        <ecNumber>7.1.1.2</ecNumber>
    </recommendedName>
    <alternativeName>
        <fullName>NADH dehydrogenase subunit 2</fullName>
    </alternativeName>
</protein>
<geneLocation type="mitochondrion"/>
<gene>
    <name type="primary">ND2</name>
</gene>
<name>NU2M_WICCA</name>
<reference key="1">
    <citation type="journal article" date="1995" name="Curr. Genet.">
        <title>The complete mitochondrial DNA sequence of Hansenula wingei reveals new characteristics of yeast mitochondria.</title>
        <authorList>
            <person name="Sekito T."/>
            <person name="Okamoto K."/>
            <person name="Kitano H."/>
            <person name="Yoshida K."/>
        </authorList>
    </citation>
    <scope>NUCLEOTIDE SEQUENCE [LARGE SCALE GENOMIC DNA]</scope>
    <source>
        <strain>21</strain>
    </source>
</reference>
<feature type="chain" id="PRO_0000117592" description="NADH-ubiquinone oxidoreductase chain 2">
    <location>
        <begin position="1"/>
        <end position="567"/>
    </location>
</feature>
<feature type="transmembrane region" description="Helical" evidence="2">
    <location>
        <begin position="2"/>
        <end position="22"/>
    </location>
</feature>
<feature type="transmembrane region" description="Helical" evidence="2">
    <location>
        <begin position="43"/>
        <end position="63"/>
    </location>
</feature>
<feature type="transmembrane region" description="Helical" evidence="2">
    <location>
        <begin position="85"/>
        <end position="105"/>
    </location>
</feature>
<feature type="transmembrane region" description="Helical" evidence="2">
    <location>
        <begin position="133"/>
        <end position="153"/>
    </location>
</feature>
<feature type="transmembrane region" description="Helical" evidence="2">
    <location>
        <begin position="158"/>
        <end position="178"/>
    </location>
</feature>
<feature type="transmembrane region" description="Helical" evidence="2">
    <location>
        <begin position="189"/>
        <end position="209"/>
    </location>
</feature>
<feature type="transmembrane region" description="Helical" evidence="2">
    <location>
        <begin position="236"/>
        <end position="256"/>
    </location>
</feature>
<feature type="transmembrane region" description="Helical" evidence="2">
    <location>
        <begin position="274"/>
        <end position="294"/>
    </location>
</feature>
<feature type="transmembrane region" description="Helical" evidence="2">
    <location>
        <begin position="312"/>
        <end position="332"/>
    </location>
</feature>
<feature type="transmembrane region" description="Helical" evidence="2">
    <location>
        <begin position="340"/>
        <end position="360"/>
    </location>
</feature>
<feature type="transmembrane region" description="Helical" evidence="2">
    <location>
        <begin position="372"/>
        <end position="392"/>
    </location>
</feature>
<feature type="transmembrane region" description="Helical" evidence="2">
    <location>
        <begin position="423"/>
        <end position="443"/>
    </location>
</feature>
<feature type="transmembrane region" description="Helical" evidence="2">
    <location>
        <begin position="459"/>
        <end position="479"/>
    </location>
</feature>
<feature type="transmembrane region" description="Helical" evidence="2">
    <location>
        <begin position="530"/>
        <end position="550"/>
    </location>
</feature>
<proteinExistence type="inferred from homology"/>